<gene>
    <name evidence="1" type="primary">MT-ATP6</name>
    <name type="synonym">ATP6</name>
    <name type="synonym">ATPASE6</name>
    <name type="synonym">MTATP6</name>
</gene>
<reference key="1">
    <citation type="journal article" date="1999" name="J. Mol. Evol.">
        <title>Phylogenetic studies of complete mitochondrial DNA molecules place cartilaginous fishes within the tree of bony fishes.</title>
        <authorList>
            <person name="Rasmussen A.S."/>
            <person name="Arnason U."/>
        </authorList>
    </citation>
    <scope>NUCLEOTIDE SEQUENCE [GENOMIC DNA]</scope>
</reference>
<keyword id="KW-0066">ATP synthesis</keyword>
<keyword id="KW-0138">CF(0)</keyword>
<keyword id="KW-0375">Hydrogen ion transport</keyword>
<keyword id="KW-0406">Ion transport</keyword>
<keyword id="KW-0472">Membrane</keyword>
<keyword id="KW-0496">Mitochondrion</keyword>
<keyword id="KW-0999">Mitochondrion inner membrane</keyword>
<keyword id="KW-0812">Transmembrane</keyword>
<keyword id="KW-1133">Transmembrane helix</keyword>
<keyword id="KW-0813">Transport</keyword>
<accession>Q9ZZ49</accession>
<proteinExistence type="inferred from homology"/>
<sequence>MNLSFFDQFLSPSLLGIPLIAMAIMIPWLIFPTPTNRWLNNRLMTVQSWFINRFTYQLMQPMNFGGHKWATILTALMLFLITINLLGLLPYTFTPTTQLSLNMAFAIPLWLTTVLIGMLNQPTVALGHLLPEGTPTLLIPILIIIETISLFIRPLALGVRLTANLTAGHLLMQLIATAAFVLITIMPTVALLTSLILFLLTILEVAVAMIQAYVFVLLLSLYLQENV</sequence>
<name>ATP6_SQUAC</name>
<evidence type="ECO:0000250" key="1">
    <source>
        <dbReference type="UniProtKB" id="P00846"/>
    </source>
</evidence>
<evidence type="ECO:0000255" key="2"/>
<evidence type="ECO:0000305" key="3"/>
<geneLocation type="mitochondrion"/>
<organism>
    <name type="scientific">Squalus acanthias</name>
    <name type="common">Spiny dogfish</name>
    <dbReference type="NCBI Taxonomy" id="7797"/>
    <lineage>
        <taxon>Eukaryota</taxon>
        <taxon>Metazoa</taxon>
        <taxon>Chordata</taxon>
        <taxon>Craniata</taxon>
        <taxon>Vertebrata</taxon>
        <taxon>Chondrichthyes</taxon>
        <taxon>Elasmobranchii</taxon>
        <taxon>Squalomorphii</taxon>
        <taxon>Squaliformes</taxon>
        <taxon>Squalidae</taxon>
        <taxon>Squalus</taxon>
    </lineage>
</organism>
<protein>
    <recommendedName>
        <fullName evidence="1">ATP synthase F(0) complex subunit a</fullName>
    </recommendedName>
    <alternativeName>
        <fullName>F-ATPase protein 6</fullName>
    </alternativeName>
    <alternativeName>
        <fullName evidence="1">Proton-conducting channel, ATP synthase F(0) complex subunit a</fullName>
    </alternativeName>
</protein>
<dbReference type="EMBL" id="Y18134">
    <property type="protein sequence ID" value="CAA77054.1"/>
    <property type="molecule type" value="Genomic_DNA"/>
</dbReference>
<dbReference type="PIR" id="T11539">
    <property type="entry name" value="T11539"/>
</dbReference>
<dbReference type="RefSeq" id="NP_008528.1">
    <property type="nucleotide sequence ID" value="NC_002012.1"/>
</dbReference>
<dbReference type="SMR" id="Q9ZZ49"/>
<dbReference type="GeneID" id="808379"/>
<dbReference type="CTD" id="4508"/>
<dbReference type="GO" id="GO:0005743">
    <property type="term" value="C:mitochondrial inner membrane"/>
    <property type="evidence" value="ECO:0007669"/>
    <property type="project" value="UniProtKB-SubCell"/>
</dbReference>
<dbReference type="GO" id="GO:0045259">
    <property type="term" value="C:proton-transporting ATP synthase complex"/>
    <property type="evidence" value="ECO:0000250"/>
    <property type="project" value="UniProtKB"/>
</dbReference>
<dbReference type="GO" id="GO:0015252">
    <property type="term" value="F:proton channel activity"/>
    <property type="evidence" value="ECO:0000250"/>
    <property type="project" value="UniProtKB"/>
</dbReference>
<dbReference type="GO" id="GO:0046933">
    <property type="term" value="F:proton-transporting ATP synthase activity, rotational mechanism"/>
    <property type="evidence" value="ECO:0007669"/>
    <property type="project" value="TreeGrafter"/>
</dbReference>
<dbReference type="GO" id="GO:0015986">
    <property type="term" value="P:proton motive force-driven ATP synthesis"/>
    <property type="evidence" value="ECO:0000250"/>
    <property type="project" value="UniProtKB"/>
</dbReference>
<dbReference type="GO" id="GO:1902600">
    <property type="term" value="P:proton transmembrane transport"/>
    <property type="evidence" value="ECO:0000250"/>
    <property type="project" value="UniProtKB"/>
</dbReference>
<dbReference type="CDD" id="cd00310">
    <property type="entry name" value="ATP-synt_Fo_a_6"/>
    <property type="match status" value="1"/>
</dbReference>
<dbReference type="FunFam" id="1.20.120.220:FF:000004">
    <property type="entry name" value="ATP synthase subunit a"/>
    <property type="match status" value="1"/>
</dbReference>
<dbReference type="Gene3D" id="1.20.120.220">
    <property type="entry name" value="ATP synthase, F0 complex, subunit A"/>
    <property type="match status" value="1"/>
</dbReference>
<dbReference type="InterPro" id="IPR000568">
    <property type="entry name" value="ATP_synth_F0_asu"/>
</dbReference>
<dbReference type="InterPro" id="IPR023011">
    <property type="entry name" value="ATP_synth_F0_asu_AS"/>
</dbReference>
<dbReference type="InterPro" id="IPR045083">
    <property type="entry name" value="ATP_synth_F0_asu_bact/mt"/>
</dbReference>
<dbReference type="InterPro" id="IPR035908">
    <property type="entry name" value="F0_ATP_A_sf"/>
</dbReference>
<dbReference type="NCBIfam" id="TIGR01131">
    <property type="entry name" value="ATP_synt_6_or_A"/>
    <property type="match status" value="1"/>
</dbReference>
<dbReference type="PANTHER" id="PTHR11410">
    <property type="entry name" value="ATP SYNTHASE SUBUNIT A"/>
    <property type="match status" value="1"/>
</dbReference>
<dbReference type="PANTHER" id="PTHR11410:SF0">
    <property type="entry name" value="ATP SYNTHASE SUBUNIT A"/>
    <property type="match status" value="1"/>
</dbReference>
<dbReference type="Pfam" id="PF00119">
    <property type="entry name" value="ATP-synt_A"/>
    <property type="match status" value="1"/>
</dbReference>
<dbReference type="PRINTS" id="PR00123">
    <property type="entry name" value="ATPASEA"/>
</dbReference>
<dbReference type="SUPFAM" id="SSF81336">
    <property type="entry name" value="F1F0 ATP synthase subunit A"/>
    <property type="match status" value="1"/>
</dbReference>
<dbReference type="PROSITE" id="PS00449">
    <property type="entry name" value="ATPASE_A"/>
    <property type="match status" value="1"/>
</dbReference>
<comment type="function">
    <text evidence="1">Subunit a, of the mitochondrial membrane ATP synthase complex (F(1)F(0) ATP synthase or Complex V) that produces ATP from ADP in the presence of a proton gradient across the membrane which is generated by electron transport complexes of the respiratory chain. ATP synthase complex consist of a soluble F(1) head domain - the catalytic core - and a membrane F(1) domain - the membrane proton channel. These two domains are linked by a central stalk rotating inside the F(1) region and a stationary peripheral stalk. During catalysis, ATP synthesis in the catalytic domain of F(1) is coupled via a rotary mechanism of the central stalk subunits to proton translocation. With the subunit c (ATP5MC1), forms the proton-conducting channel in the F(0) domain, that contains two crucial half-channels (inlet and outlet) that facilitate proton movement from the mitochondrial intermembrane space (IMS) into the matrix. Protons are taken up via the inlet half-channel and released through the outlet half-channel, following a Grotthuss mechanism.</text>
</comment>
<comment type="catalytic activity">
    <reaction evidence="1">
        <text>H(+)(in) = H(+)(out)</text>
        <dbReference type="Rhea" id="RHEA:34979"/>
        <dbReference type="ChEBI" id="CHEBI:15378"/>
    </reaction>
</comment>
<comment type="subunit">
    <text evidence="1">Component of the ATP synthase complex composed at least of ATP5F1A/subunit alpha, ATP5F1B/subunit beta, ATP5MC1/subunit c (homooctomer), MT-ATP6/subunit a, MT-ATP8/subunit 8, ATP5ME/subunit e, ATP5MF/subunit f, ATP5MG/subunit g, ATP5MK/subunit k, ATP5MJ/subunit j, ATP5F1C/subunit gamma, ATP5F1D/subunit delta, ATP5F1E/subunit epsilon, ATP5PF/subunit F6, ATP5PB/subunit b, ATP5PD/subunit d, ATP5PO/subunit OSCP. ATP synthase complex consists of a soluble F(1) head domain (subunits alpha(3) and beta(3)) - the catalytic core - and a membrane F(0) domain - the membrane proton channel (subunits c, a, 8, e, f, g, k and j). These two domains are linked by a central stalk (subunits gamma, delta, and epsilon) rotating inside the F1 region and a stationary peripheral stalk (subunits F6, b, d, and OSCP). Interacts with DNAJC30; interaction is direct.</text>
</comment>
<comment type="subcellular location">
    <subcellularLocation>
        <location>Mitochondrion inner membrane</location>
        <topology>Multi-pass membrane protein</topology>
    </subcellularLocation>
</comment>
<comment type="similarity">
    <text evidence="3">Belongs to the ATPase A chain family.</text>
</comment>
<feature type="chain" id="PRO_0000082172" description="ATP synthase F(0) complex subunit a">
    <location>
        <begin position="1"/>
        <end position="227"/>
    </location>
</feature>
<feature type="transmembrane region" description="Helical" evidence="2">
    <location>
        <begin position="14"/>
        <end position="34"/>
    </location>
</feature>
<feature type="transmembrane region" description="Helical" evidence="2">
    <location>
        <begin position="69"/>
        <end position="89"/>
    </location>
</feature>
<feature type="transmembrane region" description="Helical" evidence="2">
    <location>
        <begin position="99"/>
        <end position="119"/>
    </location>
</feature>
<feature type="transmembrane region" description="Helical" evidence="2">
    <location>
        <begin position="137"/>
        <end position="157"/>
    </location>
</feature>
<feature type="transmembrane region" description="Helical" evidence="2">
    <location>
        <begin position="180"/>
        <end position="200"/>
    </location>
</feature>
<feature type="transmembrane region" description="Helical" evidence="2">
    <location>
        <begin position="202"/>
        <end position="222"/>
    </location>
</feature>